<organism>
    <name type="scientific">Fervidobacterium nodosum (strain ATCC 35602 / DSM 5306 / Rt17-B1)</name>
    <dbReference type="NCBI Taxonomy" id="381764"/>
    <lineage>
        <taxon>Bacteria</taxon>
        <taxon>Thermotogati</taxon>
        <taxon>Thermotogota</taxon>
        <taxon>Thermotogae</taxon>
        <taxon>Thermotogales</taxon>
        <taxon>Fervidobacteriaceae</taxon>
        <taxon>Fervidobacterium</taxon>
    </lineage>
</organism>
<comment type="function">
    <text evidence="1">This is one of the proteins that bind and probably mediate the attachment of the 5S RNA into the large ribosomal subunit, where it forms part of the central protuberance.</text>
</comment>
<comment type="subunit">
    <text evidence="1">Part of the 50S ribosomal subunit; part of the 5S rRNA/L5/L18/L25 subcomplex. Contacts the 5S and 23S rRNAs.</text>
</comment>
<comment type="similarity">
    <text evidence="1">Belongs to the universal ribosomal protein uL18 family.</text>
</comment>
<name>RL18_FERNB</name>
<keyword id="KW-1185">Reference proteome</keyword>
<keyword id="KW-0687">Ribonucleoprotein</keyword>
<keyword id="KW-0689">Ribosomal protein</keyword>
<keyword id="KW-0694">RNA-binding</keyword>
<keyword id="KW-0699">rRNA-binding</keyword>
<accession>A7HM36</accession>
<gene>
    <name evidence="1" type="primary">rplR</name>
    <name type="ordered locus">Fnod_1122</name>
</gene>
<feature type="chain" id="PRO_1000073306" description="Large ribosomal subunit protein uL18">
    <location>
        <begin position="1"/>
        <end position="122"/>
    </location>
</feature>
<dbReference type="EMBL" id="CP000771">
    <property type="protein sequence ID" value="ABS60969.1"/>
    <property type="molecule type" value="Genomic_DNA"/>
</dbReference>
<dbReference type="RefSeq" id="WP_011994282.1">
    <property type="nucleotide sequence ID" value="NC_009718.1"/>
</dbReference>
<dbReference type="SMR" id="A7HM36"/>
<dbReference type="STRING" id="381764.Fnod_1122"/>
<dbReference type="KEGG" id="fno:Fnod_1122"/>
<dbReference type="eggNOG" id="COG0256">
    <property type="taxonomic scope" value="Bacteria"/>
</dbReference>
<dbReference type="HOGENOM" id="CLU_098841_0_1_0"/>
<dbReference type="OrthoDB" id="9810939at2"/>
<dbReference type="Proteomes" id="UP000002415">
    <property type="component" value="Chromosome"/>
</dbReference>
<dbReference type="GO" id="GO:0022625">
    <property type="term" value="C:cytosolic large ribosomal subunit"/>
    <property type="evidence" value="ECO:0007669"/>
    <property type="project" value="TreeGrafter"/>
</dbReference>
<dbReference type="GO" id="GO:0008097">
    <property type="term" value="F:5S rRNA binding"/>
    <property type="evidence" value="ECO:0007669"/>
    <property type="project" value="TreeGrafter"/>
</dbReference>
<dbReference type="GO" id="GO:0003735">
    <property type="term" value="F:structural constituent of ribosome"/>
    <property type="evidence" value="ECO:0007669"/>
    <property type="project" value="InterPro"/>
</dbReference>
<dbReference type="GO" id="GO:0006412">
    <property type="term" value="P:translation"/>
    <property type="evidence" value="ECO:0007669"/>
    <property type="project" value="UniProtKB-UniRule"/>
</dbReference>
<dbReference type="CDD" id="cd00432">
    <property type="entry name" value="Ribosomal_L18_L5e"/>
    <property type="match status" value="1"/>
</dbReference>
<dbReference type="FunFam" id="3.30.420.100:FF:000001">
    <property type="entry name" value="50S ribosomal protein L18"/>
    <property type="match status" value="1"/>
</dbReference>
<dbReference type="Gene3D" id="3.30.420.100">
    <property type="match status" value="1"/>
</dbReference>
<dbReference type="HAMAP" id="MF_01337_B">
    <property type="entry name" value="Ribosomal_uL18_B"/>
    <property type="match status" value="1"/>
</dbReference>
<dbReference type="InterPro" id="IPR004389">
    <property type="entry name" value="Ribosomal_uL18_bac-type"/>
</dbReference>
<dbReference type="InterPro" id="IPR005484">
    <property type="entry name" value="Ribosomal_uL18_bac/euk"/>
</dbReference>
<dbReference type="NCBIfam" id="TIGR00060">
    <property type="entry name" value="L18_bact"/>
    <property type="match status" value="1"/>
</dbReference>
<dbReference type="PANTHER" id="PTHR12899">
    <property type="entry name" value="39S RIBOSOMAL PROTEIN L18, MITOCHONDRIAL"/>
    <property type="match status" value="1"/>
</dbReference>
<dbReference type="PANTHER" id="PTHR12899:SF3">
    <property type="entry name" value="LARGE RIBOSOMAL SUBUNIT PROTEIN UL18M"/>
    <property type="match status" value="1"/>
</dbReference>
<dbReference type="Pfam" id="PF00861">
    <property type="entry name" value="Ribosomal_L18p"/>
    <property type="match status" value="1"/>
</dbReference>
<dbReference type="SUPFAM" id="SSF53137">
    <property type="entry name" value="Translational machinery components"/>
    <property type="match status" value="1"/>
</dbReference>
<sequence length="122" mass="14001">MIKREDRRQLRLVRHKRLRKKIFGTPERPRLAVFRSEKHMYAQIIDDTKGITLVAASTVEKAMKEKLQKTWNITAAKEVGKLIAERALAKGIKEVVFDRGGFKYHGRVKALADAAREAGLKF</sequence>
<reference key="1">
    <citation type="submission" date="2007-07" db="EMBL/GenBank/DDBJ databases">
        <title>Complete sequence of Fervidobacterium nodosum Rt17-B1.</title>
        <authorList>
            <consortium name="US DOE Joint Genome Institute"/>
            <person name="Copeland A."/>
            <person name="Lucas S."/>
            <person name="Lapidus A."/>
            <person name="Barry K."/>
            <person name="Glavina del Rio T."/>
            <person name="Dalin E."/>
            <person name="Tice H."/>
            <person name="Pitluck S."/>
            <person name="Saunders E."/>
            <person name="Brettin T."/>
            <person name="Bruce D."/>
            <person name="Detter J.C."/>
            <person name="Han C."/>
            <person name="Schmutz J."/>
            <person name="Larimer F."/>
            <person name="Land M."/>
            <person name="Hauser L."/>
            <person name="Kyrpides N."/>
            <person name="Mikhailova N."/>
            <person name="Nelson K."/>
            <person name="Gogarten J.P."/>
            <person name="Noll K."/>
            <person name="Richardson P."/>
        </authorList>
    </citation>
    <scope>NUCLEOTIDE SEQUENCE [LARGE SCALE GENOMIC DNA]</scope>
    <source>
        <strain>ATCC 35602 / DSM 5306 / Rt17-B1</strain>
    </source>
</reference>
<evidence type="ECO:0000255" key="1">
    <source>
        <dbReference type="HAMAP-Rule" id="MF_01337"/>
    </source>
</evidence>
<evidence type="ECO:0000305" key="2"/>
<protein>
    <recommendedName>
        <fullName evidence="1">Large ribosomal subunit protein uL18</fullName>
    </recommendedName>
    <alternativeName>
        <fullName evidence="2">50S ribosomal protein L18</fullName>
    </alternativeName>
</protein>
<proteinExistence type="inferred from homology"/>